<organism>
    <name type="scientific">Homo sapiens</name>
    <name type="common">Human</name>
    <dbReference type="NCBI Taxonomy" id="9606"/>
    <lineage>
        <taxon>Eukaryota</taxon>
        <taxon>Metazoa</taxon>
        <taxon>Chordata</taxon>
        <taxon>Craniata</taxon>
        <taxon>Vertebrata</taxon>
        <taxon>Euteleostomi</taxon>
        <taxon>Mammalia</taxon>
        <taxon>Eutheria</taxon>
        <taxon>Euarchontoglires</taxon>
        <taxon>Primates</taxon>
        <taxon>Haplorrhini</taxon>
        <taxon>Catarrhini</taxon>
        <taxon>Hominidae</taxon>
        <taxon>Homo</taxon>
    </lineage>
</organism>
<keyword id="KW-1003">Cell membrane</keyword>
<keyword id="KW-1015">Disulfide bond</keyword>
<keyword id="KW-0297">G-protein coupled receptor</keyword>
<keyword id="KW-0325">Glycoprotein</keyword>
<keyword id="KW-0472">Membrane</keyword>
<keyword id="KW-0552">Olfaction</keyword>
<keyword id="KW-0675">Receptor</keyword>
<keyword id="KW-1185">Reference proteome</keyword>
<keyword id="KW-0716">Sensory transduction</keyword>
<keyword id="KW-0807">Transducer</keyword>
<keyword id="KW-0812">Transmembrane</keyword>
<keyword id="KW-1133">Transmembrane helix</keyword>
<name>OR2G6_HUMAN</name>
<comment type="function">
    <text evidence="3">Odorant receptor.</text>
</comment>
<comment type="interaction">
    <interactant intactId="EBI-13334799">
        <id>Q5TZ20</id>
    </interactant>
    <interactant intactId="EBI-1245761">
        <id>Q00526</id>
        <label>CDK3</label>
    </interactant>
    <organismsDiffer>false</organismsDiffer>
    <experiments>3</experiments>
</comment>
<comment type="subcellular location">
    <subcellularLocation>
        <location>Cell membrane</location>
        <topology>Multi-pass membrane protein</topology>
    </subcellularLocation>
</comment>
<comment type="similarity">
    <text evidence="2">Belongs to the G-protein coupled receptor 1 family.</text>
</comment>
<comment type="online information" name="Human Olfactory Receptor Data Exploratorium (HORDE)">
    <link uri="http://genome.weizmann.ac.il/horde/card/index/symbol:OR2G6"/>
</comment>
<protein>
    <recommendedName>
        <fullName>Olfactory receptor 2G6</fullName>
    </recommendedName>
</protein>
<reference key="1">
    <citation type="journal article" date="2006" name="Nature">
        <title>The DNA sequence and biological annotation of human chromosome 1.</title>
        <authorList>
            <person name="Gregory S.G."/>
            <person name="Barlow K.F."/>
            <person name="McLay K.E."/>
            <person name="Kaul R."/>
            <person name="Swarbreck D."/>
            <person name="Dunham A."/>
            <person name="Scott C.E."/>
            <person name="Howe K.L."/>
            <person name="Woodfine K."/>
            <person name="Spencer C.C.A."/>
            <person name="Jones M.C."/>
            <person name="Gillson C."/>
            <person name="Searle S."/>
            <person name="Zhou Y."/>
            <person name="Kokocinski F."/>
            <person name="McDonald L."/>
            <person name="Evans R."/>
            <person name="Phillips K."/>
            <person name="Atkinson A."/>
            <person name="Cooper R."/>
            <person name="Jones C."/>
            <person name="Hall R.E."/>
            <person name="Andrews T.D."/>
            <person name="Lloyd C."/>
            <person name="Ainscough R."/>
            <person name="Almeida J.P."/>
            <person name="Ambrose K.D."/>
            <person name="Anderson F."/>
            <person name="Andrew R.W."/>
            <person name="Ashwell R.I.S."/>
            <person name="Aubin K."/>
            <person name="Babbage A.K."/>
            <person name="Bagguley C.L."/>
            <person name="Bailey J."/>
            <person name="Beasley H."/>
            <person name="Bethel G."/>
            <person name="Bird C.P."/>
            <person name="Bray-Allen S."/>
            <person name="Brown J.Y."/>
            <person name="Brown A.J."/>
            <person name="Buckley D."/>
            <person name="Burton J."/>
            <person name="Bye J."/>
            <person name="Carder C."/>
            <person name="Chapman J.C."/>
            <person name="Clark S.Y."/>
            <person name="Clarke G."/>
            <person name="Clee C."/>
            <person name="Cobley V."/>
            <person name="Collier R.E."/>
            <person name="Corby N."/>
            <person name="Coville G.J."/>
            <person name="Davies J."/>
            <person name="Deadman R."/>
            <person name="Dunn M."/>
            <person name="Earthrowl M."/>
            <person name="Ellington A.G."/>
            <person name="Errington H."/>
            <person name="Frankish A."/>
            <person name="Frankland J."/>
            <person name="French L."/>
            <person name="Garner P."/>
            <person name="Garnett J."/>
            <person name="Gay L."/>
            <person name="Ghori M.R.J."/>
            <person name="Gibson R."/>
            <person name="Gilby L.M."/>
            <person name="Gillett W."/>
            <person name="Glithero R.J."/>
            <person name="Grafham D.V."/>
            <person name="Griffiths C."/>
            <person name="Griffiths-Jones S."/>
            <person name="Grocock R."/>
            <person name="Hammond S."/>
            <person name="Harrison E.S.I."/>
            <person name="Hart E."/>
            <person name="Haugen E."/>
            <person name="Heath P.D."/>
            <person name="Holmes S."/>
            <person name="Holt K."/>
            <person name="Howden P.J."/>
            <person name="Hunt A.R."/>
            <person name="Hunt S.E."/>
            <person name="Hunter G."/>
            <person name="Isherwood J."/>
            <person name="James R."/>
            <person name="Johnson C."/>
            <person name="Johnson D."/>
            <person name="Joy A."/>
            <person name="Kay M."/>
            <person name="Kershaw J.K."/>
            <person name="Kibukawa M."/>
            <person name="Kimberley A.M."/>
            <person name="King A."/>
            <person name="Knights A.J."/>
            <person name="Lad H."/>
            <person name="Laird G."/>
            <person name="Lawlor S."/>
            <person name="Leongamornlert D.A."/>
            <person name="Lloyd D.M."/>
            <person name="Loveland J."/>
            <person name="Lovell J."/>
            <person name="Lush M.J."/>
            <person name="Lyne R."/>
            <person name="Martin S."/>
            <person name="Mashreghi-Mohammadi M."/>
            <person name="Matthews L."/>
            <person name="Matthews N.S.W."/>
            <person name="McLaren S."/>
            <person name="Milne S."/>
            <person name="Mistry S."/>
            <person name="Moore M.J.F."/>
            <person name="Nickerson T."/>
            <person name="O'Dell C.N."/>
            <person name="Oliver K."/>
            <person name="Palmeiri A."/>
            <person name="Palmer S.A."/>
            <person name="Parker A."/>
            <person name="Patel D."/>
            <person name="Pearce A.V."/>
            <person name="Peck A.I."/>
            <person name="Pelan S."/>
            <person name="Phelps K."/>
            <person name="Phillimore B.J."/>
            <person name="Plumb R."/>
            <person name="Rajan J."/>
            <person name="Raymond C."/>
            <person name="Rouse G."/>
            <person name="Saenphimmachak C."/>
            <person name="Sehra H.K."/>
            <person name="Sheridan E."/>
            <person name="Shownkeen R."/>
            <person name="Sims S."/>
            <person name="Skuce C.D."/>
            <person name="Smith M."/>
            <person name="Steward C."/>
            <person name="Subramanian S."/>
            <person name="Sycamore N."/>
            <person name="Tracey A."/>
            <person name="Tromans A."/>
            <person name="Van Helmond Z."/>
            <person name="Wall M."/>
            <person name="Wallis J.M."/>
            <person name="White S."/>
            <person name="Whitehead S.L."/>
            <person name="Wilkinson J.E."/>
            <person name="Willey D.L."/>
            <person name="Williams H."/>
            <person name="Wilming L."/>
            <person name="Wray P.W."/>
            <person name="Wu Z."/>
            <person name="Coulson A."/>
            <person name="Vaudin M."/>
            <person name="Sulston J.E."/>
            <person name="Durbin R.M."/>
            <person name="Hubbard T."/>
            <person name="Wooster R."/>
            <person name="Dunham I."/>
            <person name="Carter N.P."/>
            <person name="McVean G."/>
            <person name="Ross M.T."/>
            <person name="Harrow J."/>
            <person name="Olson M.V."/>
            <person name="Beck S."/>
            <person name="Rogers J."/>
            <person name="Bentley D.R."/>
        </authorList>
    </citation>
    <scope>NUCLEOTIDE SEQUENCE [LARGE SCALE GENOMIC DNA]</scope>
</reference>
<reference key="2">
    <citation type="submission" date="2005-07" db="EMBL/GenBank/DDBJ databases">
        <authorList>
            <person name="Mural R.J."/>
            <person name="Istrail S."/>
            <person name="Sutton G.G."/>
            <person name="Florea L."/>
            <person name="Halpern A.L."/>
            <person name="Mobarry C.M."/>
            <person name="Lippert R."/>
            <person name="Walenz B."/>
            <person name="Shatkay H."/>
            <person name="Dew I."/>
            <person name="Miller J.R."/>
            <person name="Flanigan M.J."/>
            <person name="Edwards N.J."/>
            <person name="Bolanos R."/>
            <person name="Fasulo D."/>
            <person name="Halldorsson B.V."/>
            <person name="Hannenhalli S."/>
            <person name="Turner R."/>
            <person name="Yooseph S."/>
            <person name="Lu F."/>
            <person name="Nusskern D.R."/>
            <person name="Shue B.C."/>
            <person name="Zheng X.H."/>
            <person name="Zhong F."/>
            <person name="Delcher A.L."/>
            <person name="Huson D.H."/>
            <person name="Kravitz S.A."/>
            <person name="Mouchard L."/>
            <person name="Reinert K."/>
            <person name="Remington K.A."/>
            <person name="Clark A.G."/>
            <person name="Waterman M.S."/>
            <person name="Eichler E.E."/>
            <person name="Adams M.D."/>
            <person name="Hunkapiller M.W."/>
            <person name="Myers E.W."/>
            <person name="Venter J.C."/>
        </authorList>
    </citation>
    <scope>NUCLEOTIDE SEQUENCE [LARGE SCALE GENOMIC DNA]</scope>
</reference>
<reference key="3">
    <citation type="journal article" date="2004" name="Genome Res.">
        <title>The status, quality, and expansion of the NIH full-length cDNA project: the Mammalian Gene Collection (MGC).</title>
        <authorList>
            <consortium name="The MGC Project Team"/>
        </authorList>
    </citation>
    <scope>NUCLEOTIDE SEQUENCE [LARGE SCALE MRNA]</scope>
</reference>
<sequence length="316" mass="34890">MEETNNSSEKGFLLLGFSDQPQLERFLFAIILYFYVLSLLGNTALILVCCLDSRLHTPMYFFLSNLSCVDICFTTSVAPQLLVTMNKKDKTMSYGGCVAQLYVAMGLGSSECILLAVMAYDRYAAVCRPLRYIAIMHPRFCASLAGGAWLSGLITSLIQCSLTVQLPLCGHRTLDHIFCEVPVLIKLACVDTTFNEAELFVASVVFLIVPVLLILVSYGFITQAVLRIKSAAGRQKAFGTCSSHLVVVIIFYGTIIFMYLQPANRRSKNQGKFVSLFYTIVTPLLNPIIYTLRNKDVKGALRTLILGSAAGQSHKD</sequence>
<proteinExistence type="evidence at protein level"/>
<gene>
    <name type="primary">OR2G6</name>
</gene>
<dbReference type="EMBL" id="BX537158">
    <property type="status" value="NOT_ANNOTATED_CDS"/>
    <property type="molecule type" value="Genomic_DNA"/>
</dbReference>
<dbReference type="EMBL" id="CH471148">
    <property type="protein sequence ID" value="EAW77231.1"/>
    <property type="molecule type" value="Genomic_DNA"/>
</dbReference>
<dbReference type="EMBL" id="BC137245">
    <property type="protein sequence ID" value="AAI37246.1"/>
    <property type="molecule type" value="mRNA"/>
</dbReference>
<dbReference type="EMBL" id="BC137266">
    <property type="protein sequence ID" value="AAI37267.1"/>
    <property type="molecule type" value="mRNA"/>
</dbReference>
<dbReference type="CCDS" id="CCDS31119.1"/>
<dbReference type="RefSeq" id="NP_001013373.1">
    <property type="nucleotide sequence ID" value="NM_001013355.2"/>
</dbReference>
<dbReference type="SMR" id="Q5TZ20"/>
<dbReference type="BioGRID" id="133856">
    <property type="interactions" value="19"/>
</dbReference>
<dbReference type="FunCoup" id="Q5TZ20">
    <property type="interactions" value="453"/>
</dbReference>
<dbReference type="IntAct" id="Q5TZ20">
    <property type="interactions" value="16"/>
</dbReference>
<dbReference type="STRING" id="9606.ENSP00000493355"/>
<dbReference type="GlyCosmos" id="Q5TZ20">
    <property type="glycosylation" value="2 sites, No reported glycans"/>
</dbReference>
<dbReference type="GlyGen" id="Q5TZ20">
    <property type="glycosylation" value="2 sites"/>
</dbReference>
<dbReference type="iPTMnet" id="Q5TZ20"/>
<dbReference type="PhosphoSitePlus" id="Q5TZ20"/>
<dbReference type="BioMuta" id="OR2G6"/>
<dbReference type="DMDM" id="74762248"/>
<dbReference type="PaxDb" id="9606-ENSP00000341291"/>
<dbReference type="PeptideAtlas" id="Q5TZ20"/>
<dbReference type="Antibodypedia" id="68599">
    <property type="antibodies" value="73 antibodies from 16 providers"/>
</dbReference>
<dbReference type="DNASU" id="391211"/>
<dbReference type="Ensembl" id="ENST00000641501.1">
    <property type="protein sequence ID" value="ENSP00000492940.1"/>
    <property type="gene ID" value="ENSG00000188558.7"/>
</dbReference>
<dbReference type="Ensembl" id="ENST00000641804.1">
    <property type="protein sequence ID" value="ENSP00000493355.1"/>
    <property type="gene ID" value="ENSG00000188558.7"/>
</dbReference>
<dbReference type="Ensembl" id="ENST00000710907.1">
    <property type="protein sequence ID" value="ENSP00000518543.1"/>
    <property type="gene ID" value="ENSG00000292302.1"/>
</dbReference>
<dbReference type="Ensembl" id="ENST00000710908.1">
    <property type="protein sequence ID" value="ENSP00000518544.1"/>
    <property type="gene ID" value="ENSG00000292302.1"/>
</dbReference>
<dbReference type="GeneID" id="391211"/>
<dbReference type="KEGG" id="hsa:391211"/>
<dbReference type="MANE-Select" id="ENST00000641804.1">
    <property type="protein sequence ID" value="ENSP00000493355.1"/>
    <property type="RefSeq nucleotide sequence ID" value="NM_001013355.2"/>
    <property type="RefSeq protein sequence ID" value="NP_001013373.1"/>
</dbReference>
<dbReference type="UCSC" id="uc001ien.1">
    <property type="organism name" value="human"/>
</dbReference>
<dbReference type="AGR" id="HGNC:27019"/>
<dbReference type="CTD" id="391211"/>
<dbReference type="DisGeNET" id="391211"/>
<dbReference type="GeneCards" id="OR2G6"/>
<dbReference type="HGNC" id="HGNC:27019">
    <property type="gene designation" value="OR2G6"/>
</dbReference>
<dbReference type="HPA" id="ENSG00000188558">
    <property type="expression patterns" value="Not detected"/>
</dbReference>
<dbReference type="neXtProt" id="NX_Q5TZ20"/>
<dbReference type="PharmGKB" id="PA142671228"/>
<dbReference type="VEuPathDB" id="HostDB:ENSG00000188558"/>
<dbReference type="eggNOG" id="ENOG502SI2C">
    <property type="taxonomic scope" value="Eukaryota"/>
</dbReference>
<dbReference type="GeneTree" id="ENSGT01130000278266"/>
<dbReference type="HOGENOM" id="CLU_012526_1_2_1"/>
<dbReference type="InParanoid" id="Q5TZ20"/>
<dbReference type="OMA" id="KNMSYGG"/>
<dbReference type="OrthoDB" id="9442215at2759"/>
<dbReference type="PAN-GO" id="Q5TZ20">
    <property type="GO annotations" value="0 GO annotations based on evolutionary models"/>
</dbReference>
<dbReference type="PhylomeDB" id="Q5TZ20"/>
<dbReference type="TreeFam" id="TF336512"/>
<dbReference type="PathwayCommons" id="Q5TZ20"/>
<dbReference type="Reactome" id="R-HSA-9752946">
    <property type="pathway name" value="Expression and translocation of olfactory receptors"/>
</dbReference>
<dbReference type="SignaLink" id="Q5TZ20"/>
<dbReference type="BioGRID-ORCS" id="391211">
    <property type="hits" value="10 hits in 752 CRISPR screens"/>
</dbReference>
<dbReference type="GeneWiki" id="OR2G6"/>
<dbReference type="GenomeRNAi" id="391211"/>
<dbReference type="Pharos" id="Q5TZ20">
    <property type="development level" value="Tdark"/>
</dbReference>
<dbReference type="PRO" id="PR:Q5TZ20"/>
<dbReference type="Proteomes" id="UP000005640">
    <property type="component" value="Chromosome 1"/>
</dbReference>
<dbReference type="RNAct" id="Q5TZ20">
    <property type="molecule type" value="protein"/>
</dbReference>
<dbReference type="Bgee" id="ENSG00000188558">
    <property type="expression patterns" value="Expressed in adult mammalian kidney and 2 other cell types or tissues"/>
</dbReference>
<dbReference type="ExpressionAtlas" id="Q5TZ20">
    <property type="expression patterns" value="baseline and differential"/>
</dbReference>
<dbReference type="GO" id="GO:0005886">
    <property type="term" value="C:plasma membrane"/>
    <property type="evidence" value="ECO:0000318"/>
    <property type="project" value="GO_Central"/>
</dbReference>
<dbReference type="GO" id="GO:0004930">
    <property type="term" value="F:G protein-coupled receptor activity"/>
    <property type="evidence" value="ECO:0007669"/>
    <property type="project" value="UniProtKB-KW"/>
</dbReference>
<dbReference type="GO" id="GO:0004984">
    <property type="term" value="F:olfactory receptor activity"/>
    <property type="evidence" value="ECO:0000318"/>
    <property type="project" value="GO_Central"/>
</dbReference>
<dbReference type="GO" id="GO:0050911">
    <property type="term" value="P:detection of chemical stimulus involved in sensory perception of smell"/>
    <property type="evidence" value="ECO:0000318"/>
    <property type="project" value="GO_Central"/>
</dbReference>
<dbReference type="CDD" id="cd15947">
    <property type="entry name" value="7tmA_OR2B-like"/>
    <property type="match status" value="1"/>
</dbReference>
<dbReference type="FunFam" id="1.20.1070.10:FF:000005">
    <property type="entry name" value="Olfactory receptor"/>
    <property type="match status" value="1"/>
</dbReference>
<dbReference type="Gene3D" id="1.20.1070.10">
    <property type="entry name" value="Rhodopsin 7-helix transmembrane proteins"/>
    <property type="match status" value="1"/>
</dbReference>
<dbReference type="InterPro" id="IPR000276">
    <property type="entry name" value="GPCR_Rhodpsn"/>
</dbReference>
<dbReference type="InterPro" id="IPR017452">
    <property type="entry name" value="GPCR_Rhodpsn_7TM"/>
</dbReference>
<dbReference type="InterPro" id="IPR000725">
    <property type="entry name" value="Olfact_rcpt"/>
</dbReference>
<dbReference type="PANTHER" id="PTHR26453">
    <property type="entry name" value="OLFACTORY RECEPTOR"/>
    <property type="match status" value="1"/>
</dbReference>
<dbReference type="Pfam" id="PF13853">
    <property type="entry name" value="7tm_4"/>
    <property type="match status" value="1"/>
</dbReference>
<dbReference type="PRINTS" id="PR00237">
    <property type="entry name" value="GPCRRHODOPSN"/>
</dbReference>
<dbReference type="PRINTS" id="PR00245">
    <property type="entry name" value="OLFACTORYR"/>
</dbReference>
<dbReference type="SUPFAM" id="SSF81321">
    <property type="entry name" value="Family A G protein-coupled receptor-like"/>
    <property type="match status" value="1"/>
</dbReference>
<dbReference type="PROSITE" id="PS00237">
    <property type="entry name" value="G_PROTEIN_RECEP_F1_1"/>
    <property type="match status" value="1"/>
</dbReference>
<dbReference type="PROSITE" id="PS50262">
    <property type="entry name" value="G_PROTEIN_RECEP_F1_2"/>
    <property type="match status" value="1"/>
</dbReference>
<evidence type="ECO:0000255" key="1"/>
<evidence type="ECO:0000255" key="2">
    <source>
        <dbReference type="PROSITE-ProRule" id="PRU00521"/>
    </source>
</evidence>
<evidence type="ECO:0000305" key="3"/>
<accession>Q5TZ20</accession>
<accession>B2RP33</accession>
<feature type="chain" id="PRO_0000150478" description="Olfactory receptor 2G6">
    <location>
        <begin position="1"/>
        <end position="316"/>
    </location>
</feature>
<feature type="topological domain" description="Extracellular" evidence="1">
    <location>
        <begin position="1"/>
        <end position="25"/>
    </location>
</feature>
<feature type="transmembrane region" description="Helical; Name=1" evidence="1">
    <location>
        <begin position="26"/>
        <end position="49"/>
    </location>
</feature>
<feature type="topological domain" description="Cytoplasmic" evidence="1">
    <location>
        <begin position="50"/>
        <end position="57"/>
    </location>
</feature>
<feature type="transmembrane region" description="Helical; Name=2" evidence="1">
    <location>
        <begin position="58"/>
        <end position="79"/>
    </location>
</feature>
<feature type="topological domain" description="Extracellular" evidence="1">
    <location>
        <begin position="80"/>
        <end position="100"/>
    </location>
</feature>
<feature type="transmembrane region" description="Helical; Name=3" evidence="1">
    <location>
        <begin position="101"/>
        <end position="120"/>
    </location>
</feature>
<feature type="topological domain" description="Cytoplasmic" evidence="1">
    <location>
        <begin position="121"/>
        <end position="139"/>
    </location>
</feature>
<feature type="transmembrane region" description="Helical; Name=4" evidence="1">
    <location>
        <begin position="140"/>
        <end position="158"/>
    </location>
</feature>
<feature type="topological domain" description="Extracellular" evidence="1">
    <location>
        <begin position="159"/>
        <end position="195"/>
    </location>
</feature>
<feature type="transmembrane region" description="Helical; Name=5" evidence="1">
    <location>
        <begin position="196"/>
        <end position="219"/>
    </location>
</feature>
<feature type="topological domain" description="Cytoplasmic" evidence="1">
    <location>
        <begin position="220"/>
        <end position="236"/>
    </location>
</feature>
<feature type="transmembrane region" description="Helical; Name=6" evidence="1">
    <location>
        <begin position="237"/>
        <end position="259"/>
    </location>
</feature>
<feature type="topological domain" description="Extracellular" evidence="1">
    <location>
        <begin position="260"/>
        <end position="272"/>
    </location>
</feature>
<feature type="transmembrane region" description="Helical; Name=7" evidence="1">
    <location>
        <begin position="273"/>
        <end position="292"/>
    </location>
</feature>
<feature type="topological domain" description="Cytoplasmic" evidence="1">
    <location>
        <begin position="293"/>
        <end position="316"/>
    </location>
</feature>
<feature type="glycosylation site" description="N-linked (GlcNAc...) asparagine" evidence="1">
    <location>
        <position position="5"/>
    </location>
</feature>
<feature type="glycosylation site" description="N-linked (GlcNAc...) asparagine" evidence="1">
    <location>
        <position position="6"/>
    </location>
</feature>
<feature type="disulfide bond" evidence="2">
    <location>
        <begin position="97"/>
        <end position="189"/>
    </location>
</feature>
<feature type="sequence variant" id="VAR_062020" description="In dbSNP:rs58955396.">
    <original>M</original>
    <variation>V</variation>
    <location>
        <position position="59"/>
    </location>
</feature>
<feature type="sequence variant" id="VAR_053142" description="In dbSNP:rs9330305.">
    <original>M</original>
    <variation>L</variation>
    <location>
        <position position="258"/>
    </location>
</feature>